<name>DXR_MICAN</name>
<gene>
    <name evidence="1" type="primary">dxr</name>
    <name type="ordered locus">MAE_50310</name>
</gene>
<keyword id="KW-0414">Isoprene biosynthesis</keyword>
<keyword id="KW-0464">Manganese</keyword>
<keyword id="KW-0479">Metal-binding</keyword>
<keyword id="KW-0521">NADP</keyword>
<keyword id="KW-0560">Oxidoreductase</keyword>
<evidence type="ECO:0000255" key="1">
    <source>
        <dbReference type="HAMAP-Rule" id="MF_00183"/>
    </source>
</evidence>
<accession>B0JWW6</accession>
<feature type="chain" id="PRO_1000124099" description="1-deoxy-D-xylulose 5-phosphate reductoisomerase">
    <location>
        <begin position="1"/>
        <end position="390"/>
    </location>
</feature>
<feature type="binding site" evidence="1">
    <location>
        <position position="10"/>
    </location>
    <ligand>
        <name>NADPH</name>
        <dbReference type="ChEBI" id="CHEBI:57783"/>
    </ligand>
</feature>
<feature type="binding site" evidence="1">
    <location>
        <position position="11"/>
    </location>
    <ligand>
        <name>NADPH</name>
        <dbReference type="ChEBI" id="CHEBI:57783"/>
    </ligand>
</feature>
<feature type="binding site" evidence="1">
    <location>
        <position position="12"/>
    </location>
    <ligand>
        <name>NADPH</name>
        <dbReference type="ChEBI" id="CHEBI:57783"/>
    </ligand>
</feature>
<feature type="binding site" evidence="1">
    <location>
        <position position="13"/>
    </location>
    <ligand>
        <name>NADPH</name>
        <dbReference type="ChEBI" id="CHEBI:57783"/>
    </ligand>
</feature>
<feature type="binding site" evidence="1">
    <location>
        <position position="36"/>
    </location>
    <ligand>
        <name>NADPH</name>
        <dbReference type="ChEBI" id="CHEBI:57783"/>
    </ligand>
</feature>
<feature type="binding site" evidence="1">
    <location>
        <position position="38"/>
    </location>
    <ligand>
        <name>NADPH</name>
        <dbReference type="ChEBI" id="CHEBI:57783"/>
    </ligand>
</feature>
<feature type="binding site" evidence="1">
    <location>
        <position position="124"/>
    </location>
    <ligand>
        <name>NADPH</name>
        <dbReference type="ChEBI" id="CHEBI:57783"/>
    </ligand>
</feature>
<feature type="binding site" evidence="1">
    <location>
        <position position="125"/>
    </location>
    <ligand>
        <name>1-deoxy-D-xylulose 5-phosphate</name>
        <dbReference type="ChEBI" id="CHEBI:57792"/>
    </ligand>
</feature>
<feature type="binding site" evidence="1">
    <location>
        <position position="126"/>
    </location>
    <ligand>
        <name>NADPH</name>
        <dbReference type="ChEBI" id="CHEBI:57783"/>
    </ligand>
</feature>
<feature type="binding site" evidence="1">
    <location>
        <position position="150"/>
    </location>
    <ligand>
        <name>Mn(2+)</name>
        <dbReference type="ChEBI" id="CHEBI:29035"/>
    </ligand>
</feature>
<feature type="binding site" evidence="1">
    <location>
        <position position="151"/>
    </location>
    <ligand>
        <name>1-deoxy-D-xylulose 5-phosphate</name>
        <dbReference type="ChEBI" id="CHEBI:57792"/>
    </ligand>
</feature>
<feature type="binding site" evidence="1">
    <location>
        <position position="152"/>
    </location>
    <ligand>
        <name>1-deoxy-D-xylulose 5-phosphate</name>
        <dbReference type="ChEBI" id="CHEBI:57792"/>
    </ligand>
</feature>
<feature type="binding site" evidence="1">
    <location>
        <position position="152"/>
    </location>
    <ligand>
        <name>Mn(2+)</name>
        <dbReference type="ChEBI" id="CHEBI:29035"/>
    </ligand>
</feature>
<feature type="binding site" evidence="1">
    <location>
        <position position="176"/>
    </location>
    <ligand>
        <name>1-deoxy-D-xylulose 5-phosphate</name>
        <dbReference type="ChEBI" id="CHEBI:57792"/>
    </ligand>
</feature>
<feature type="binding site" evidence="1">
    <location>
        <position position="199"/>
    </location>
    <ligand>
        <name>1-deoxy-D-xylulose 5-phosphate</name>
        <dbReference type="ChEBI" id="CHEBI:57792"/>
    </ligand>
</feature>
<feature type="binding site" evidence="1">
    <location>
        <position position="205"/>
    </location>
    <ligand>
        <name>NADPH</name>
        <dbReference type="ChEBI" id="CHEBI:57783"/>
    </ligand>
</feature>
<feature type="binding site" evidence="1">
    <location>
        <position position="212"/>
    </location>
    <ligand>
        <name>1-deoxy-D-xylulose 5-phosphate</name>
        <dbReference type="ChEBI" id="CHEBI:57792"/>
    </ligand>
</feature>
<feature type="binding site" evidence="1">
    <location>
        <position position="217"/>
    </location>
    <ligand>
        <name>1-deoxy-D-xylulose 5-phosphate</name>
        <dbReference type="ChEBI" id="CHEBI:57792"/>
    </ligand>
</feature>
<feature type="binding site" evidence="1">
    <location>
        <position position="218"/>
    </location>
    <ligand>
        <name>1-deoxy-D-xylulose 5-phosphate</name>
        <dbReference type="ChEBI" id="CHEBI:57792"/>
    </ligand>
</feature>
<feature type="binding site" evidence="1">
    <location>
        <position position="221"/>
    </location>
    <ligand>
        <name>1-deoxy-D-xylulose 5-phosphate</name>
        <dbReference type="ChEBI" id="CHEBI:57792"/>
    </ligand>
</feature>
<feature type="binding site" evidence="1">
    <location>
        <position position="221"/>
    </location>
    <ligand>
        <name>Mn(2+)</name>
        <dbReference type="ChEBI" id="CHEBI:29035"/>
    </ligand>
</feature>
<reference key="1">
    <citation type="journal article" date="2007" name="DNA Res.">
        <title>Complete genomic structure of the bloom-forming toxic cyanobacterium Microcystis aeruginosa NIES-843.</title>
        <authorList>
            <person name="Kaneko T."/>
            <person name="Nakajima N."/>
            <person name="Okamoto S."/>
            <person name="Suzuki I."/>
            <person name="Tanabe Y."/>
            <person name="Tamaoki M."/>
            <person name="Nakamura Y."/>
            <person name="Kasai F."/>
            <person name="Watanabe A."/>
            <person name="Kawashima K."/>
            <person name="Kishida Y."/>
            <person name="Ono A."/>
            <person name="Shimizu Y."/>
            <person name="Takahashi C."/>
            <person name="Minami C."/>
            <person name="Fujishiro T."/>
            <person name="Kohara M."/>
            <person name="Katoh M."/>
            <person name="Nakazaki N."/>
            <person name="Nakayama S."/>
            <person name="Yamada M."/>
            <person name="Tabata S."/>
            <person name="Watanabe M.M."/>
        </authorList>
    </citation>
    <scope>NUCLEOTIDE SEQUENCE [LARGE SCALE GENOMIC DNA]</scope>
    <source>
        <strain>NIES-843 / IAM M-247</strain>
    </source>
</reference>
<comment type="function">
    <text evidence="1">Catalyzes the NADPH-dependent rearrangement and reduction of 1-deoxy-D-xylulose-5-phosphate (DXP) to 2-C-methyl-D-erythritol 4-phosphate (MEP).</text>
</comment>
<comment type="catalytic activity">
    <reaction evidence="1">
        <text>2-C-methyl-D-erythritol 4-phosphate + NADP(+) = 1-deoxy-D-xylulose 5-phosphate + NADPH + H(+)</text>
        <dbReference type="Rhea" id="RHEA:13717"/>
        <dbReference type="ChEBI" id="CHEBI:15378"/>
        <dbReference type="ChEBI" id="CHEBI:57783"/>
        <dbReference type="ChEBI" id="CHEBI:57792"/>
        <dbReference type="ChEBI" id="CHEBI:58262"/>
        <dbReference type="ChEBI" id="CHEBI:58349"/>
        <dbReference type="EC" id="1.1.1.267"/>
    </reaction>
    <physiologicalReaction direction="right-to-left" evidence="1">
        <dbReference type="Rhea" id="RHEA:13719"/>
    </physiologicalReaction>
</comment>
<comment type="cofactor">
    <cofactor evidence="1">
        <name>Mg(2+)</name>
        <dbReference type="ChEBI" id="CHEBI:18420"/>
    </cofactor>
    <cofactor evidence="1">
        <name>Mn(2+)</name>
        <dbReference type="ChEBI" id="CHEBI:29035"/>
    </cofactor>
</comment>
<comment type="pathway">
    <text evidence="1">Isoprenoid biosynthesis; isopentenyl diphosphate biosynthesis via DXP pathway; isopentenyl diphosphate from 1-deoxy-D-xylulose 5-phosphate: step 1/6.</text>
</comment>
<comment type="similarity">
    <text evidence="1">Belongs to the DXR family.</text>
</comment>
<sequence length="390" mass="42189">MKKISILGSTGSIGTQTLDIVTDHPDKFQVVGLATGNNIQLLSEQIRQFRPQIVAINNESQLEDLKSLISDLDYTPIILAGKEGVIEVARYGDSESVVTGIVGCAGLLPTIAAITAGKDIALANKETLIAGGPVVLPLVEKHRVKLLPADSEHSAIFQCLQGVPTGGLKKIILTASGGAFRDLPVEKLPQVTVADALKHPNWSMGRKITIDSATLMNKGLEVIEAHYLFGVDYNAIDIVIHPQSIIHSLIELQDTSVLAQLGWPDMRLPLLYALSWPERIYTDWEPLNLVKAGSLTFKEPDHQKYPCMGLAYAAGRAGGAMPAVLNAANEQAVALFLEEKISFLDIPRVIEKVCDRFAIHNTSTPSLDDILAADNWARQEVSNCLIANPV</sequence>
<dbReference type="EC" id="1.1.1.267" evidence="1"/>
<dbReference type="EMBL" id="AP009552">
    <property type="protein sequence ID" value="BAG04853.1"/>
    <property type="molecule type" value="Genomic_DNA"/>
</dbReference>
<dbReference type="RefSeq" id="WP_002763350.1">
    <property type="nucleotide sequence ID" value="NC_010296.1"/>
</dbReference>
<dbReference type="SMR" id="B0JWW6"/>
<dbReference type="STRING" id="449447.MAE_50310"/>
<dbReference type="PaxDb" id="449447-MAE_50310"/>
<dbReference type="EnsemblBacteria" id="BAG04853">
    <property type="protein sequence ID" value="BAG04853"/>
    <property type="gene ID" value="MAE_50310"/>
</dbReference>
<dbReference type="KEGG" id="mar:MAE_50310"/>
<dbReference type="eggNOG" id="COG0743">
    <property type="taxonomic scope" value="Bacteria"/>
</dbReference>
<dbReference type="HOGENOM" id="CLU_035714_4_0_3"/>
<dbReference type="BioCyc" id="MAER449447:MAE_RS21825-MONOMER"/>
<dbReference type="UniPathway" id="UPA00056">
    <property type="reaction ID" value="UER00092"/>
</dbReference>
<dbReference type="Proteomes" id="UP000001510">
    <property type="component" value="Chromosome"/>
</dbReference>
<dbReference type="GO" id="GO:0030604">
    <property type="term" value="F:1-deoxy-D-xylulose-5-phosphate reductoisomerase activity"/>
    <property type="evidence" value="ECO:0007669"/>
    <property type="project" value="UniProtKB-UniRule"/>
</dbReference>
<dbReference type="GO" id="GO:0030145">
    <property type="term" value="F:manganese ion binding"/>
    <property type="evidence" value="ECO:0007669"/>
    <property type="project" value="TreeGrafter"/>
</dbReference>
<dbReference type="GO" id="GO:0070402">
    <property type="term" value="F:NADPH binding"/>
    <property type="evidence" value="ECO:0007669"/>
    <property type="project" value="InterPro"/>
</dbReference>
<dbReference type="GO" id="GO:0051484">
    <property type="term" value="P:isopentenyl diphosphate biosynthetic process, methylerythritol 4-phosphate pathway involved in terpenoid biosynthetic process"/>
    <property type="evidence" value="ECO:0007669"/>
    <property type="project" value="TreeGrafter"/>
</dbReference>
<dbReference type="FunFam" id="3.40.50.720:FF:000183">
    <property type="entry name" value="1-deoxy-D-xylulose 5-phosphate reductoisomerase, chloroplastic"/>
    <property type="match status" value="1"/>
</dbReference>
<dbReference type="Gene3D" id="1.10.1740.10">
    <property type="match status" value="1"/>
</dbReference>
<dbReference type="Gene3D" id="3.40.50.720">
    <property type="entry name" value="NAD(P)-binding Rossmann-like Domain"/>
    <property type="match status" value="1"/>
</dbReference>
<dbReference type="HAMAP" id="MF_00183">
    <property type="entry name" value="DXP_reductoisom"/>
    <property type="match status" value="1"/>
</dbReference>
<dbReference type="InterPro" id="IPR003821">
    <property type="entry name" value="DXP_reductoisomerase"/>
</dbReference>
<dbReference type="InterPro" id="IPR013644">
    <property type="entry name" value="DXP_reductoisomerase_C"/>
</dbReference>
<dbReference type="InterPro" id="IPR013512">
    <property type="entry name" value="DXP_reductoisomerase_N"/>
</dbReference>
<dbReference type="InterPro" id="IPR026877">
    <property type="entry name" value="DXPR_C"/>
</dbReference>
<dbReference type="InterPro" id="IPR036169">
    <property type="entry name" value="DXPR_C_sf"/>
</dbReference>
<dbReference type="InterPro" id="IPR036291">
    <property type="entry name" value="NAD(P)-bd_dom_sf"/>
</dbReference>
<dbReference type="NCBIfam" id="TIGR00243">
    <property type="entry name" value="Dxr"/>
    <property type="match status" value="1"/>
</dbReference>
<dbReference type="NCBIfam" id="NF009114">
    <property type="entry name" value="PRK12464.1"/>
    <property type="match status" value="1"/>
</dbReference>
<dbReference type="PANTHER" id="PTHR30525">
    <property type="entry name" value="1-DEOXY-D-XYLULOSE 5-PHOSPHATE REDUCTOISOMERASE"/>
    <property type="match status" value="1"/>
</dbReference>
<dbReference type="PANTHER" id="PTHR30525:SF0">
    <property type="entry name" value="1-DEOXY-D-XYLULOSE 5-PHOSPHATE REDUCTOISOMERASE, CHLOROPLASTIC"/>
    <property type="match status" value="1"/>
</dbReference>
<dbReference type="Pfam" id="PF08436">
    <property type="entry name" value="DXP_redisom_C"/>
    <property type="match status" value="1"/>
</dbReference>
<dbReference type="Pfam" id="PF02670">
    <property type="entry name" value="DXP_reductoisom"/>
    <property type="match status" value="1"/>
</dbReference>
<dbReference type="Pfam" id="PF13288">
    <property type="entry name" value="DXPR_C"/>
    <property type="match status" value="1"/>
</dbReference>
<dbReference type="PIRSF" id="PIRSF006205">
    <property type="entry name" value="Dxp_reductismrs"/>
    <property type="match status" value="1"/>
</dbReference>
<dbReference type="SUPFAM" id="SSF69055">
    <property type="entry name" value="1-deoxy-D-xylulose-5-phosphate reductoisomerase, C-terminal domain"/>
    <property type="match status" value="1"/>
</dbReference>
<dbReference type="SUPFAM" id="SSF55347">
    <property type="entry name" value="Glyceraldehyde-3-phosphate dehydrogenase-like, C-terminal domain"/>
    <property type="match status" value="1"/>
</dbReference>
<dbReference type="SUPFAM" id="SSF51735">
    <property type="entry name" value="NAD(P)-binding Rossmann-fold domains"/>
    <property type="match status" value="1"/>
</dbReference>
<protein>
    <recommendedName>
        <fullName evidence="1">1-deoxy-D-xylulose 5-phosphate reductoisomerase</fullName>
        <shortName evidence="1">DXP reductoisomerase</shortName>
        <ecNumber evidence="1">1.1.1.267</ecNumber>
    </recommendedName>
    <alternativeName>
        <fullName evidence="1">1-deoxyxylulose-5-phosphate reductoisomerase</fullName>
    </alternativeName>
    <alternativeName>
        <fullName evidence="1">2-C-methyl-D-erythritol 4-phosphate synthase</fullName>
    </alternativeName>
</protein>
<organism>
    <name type="scientific">Microcystis aeruginosa (strain NIES-843 / IAM M-2473)</name>
    <dbReference type="NCBI Taxonomy" id="449447"/>
    <lineage>
        <taxon>Bacteria</taxon>
        <taxon>Bacillati</taxon>
        <taxon>Cyanobacteriota</taxon>
        <taxon>Cyanophyceae</taxon>
        <taxon>Oscillatoriophycideae</taxon>
        <taxon>Chroococcales</taxon>
        <taxon>Microcystaceae</taxon>
        <taxon>Microcystis</taxon>
    </lineage>
</organism>
<proteinExistence type="inferred from homology"/>